<gene>
    <name evidence="1" type="primary">ilvD</name>
    <name type="ordered locus">Moth_2259</name>
</gene>
<keyword id="KW-0001">2Fe-2S</keyword>
<keyword id="KW-0028">Amino-acid biosynthesis</keyword>
<keyword id="KW-0100">Branched-chain amino acid biosynthesis</keyword>
<keyword id="KW-0408">Iron</keyword>
<keyword id="KW-0411">Iron-sulfur</keyword>
<keyword id="KW-0456">Lyase</keyword>
<keyword id="KW-0460">Magnesium</keyword>
<keyword id="KW-0479">Metal-binding</keyword>
<feature type="chain" id="PRO_1000001014" description="Dihydroxy-acid dehydratase">
    <location>
        <begin position="1"/>
        <end position="552"/>
    </location>
</feature>
<feature type="active site" description="Proton acceptor" evidence="1">
    <location>
        <position position="468"/>
    </location>
</feature>
<feature type="binding site" evidence="1">
    <location>
        <position position="78"/>
    </location>
    <ligand>
        <name>Mg(2+)</name>
        <dbReference type="ChEBI" id="CHEBI:18420"/>
    </ligand>
</feature>
<feature type="binding site" evidence="1">
    <location>
        <position position="119"/>
    </location>
    <ligand>
        <name>[2Fe-2S] cluster</name>
        <dbReference type="ChEBI" id="CHEBI:190135"/>
    </ligand>
</feature>
<feature type="binding site" evidence="1">
    <location>
        <position position="120"/>
    </location>
    <ligand>
        <name>Mg(2+)</name>
        <dbReference type="ChEBI" id="CHEBI:18420"/>
    </ligand>
</feature>
<feature type="binding site" description="via carbamate group" evidence="1">
    <location>
        <position position="121"/>
    </location>
    <ligand>
        <name>Mg(2+)</name>
        <dbReference type="ChEBI" id="CHEBI:18420"/>
    </ligand>
</feature>
<feature type="binding site" evidence="1">
    <location>
        <position position="191"/>
    </location>
    <ligand>
        <name>[2Fe-2S] cluster</name>
        <dbReference type="ChEBI" id="CHEBI:190135"/>
    </ligand>
</feature>
<feature type="binding site" evidence="1">
    <location>
        <position position="442"/>
    </location>
    <ligand>
        <name>Mg(2+)</name>
        <dbReference type="ChEBI" id="CHEBI:18420"/>
    </ligand>
</feature>
<feature type="modified residue" description="N6-carboxylysine" evidence="1">
    <location>
        <position position="121"/>
    </location>
</feature>
<organism>
    <name type="scientific">Moorella thermoacetica (strain ATCC 39073 / JCM 9320)</name>
    <dbReference type="NCBI Taxonomy" id="264732"/>
    <lineage>
        <taxon>Bacteria</taxon>
        <taxon>Bacillati</taxon>
        <taxon>Bacillota</taxon>
        <taxon>Clostridia</taxon>
        <taxon>Moorellales</taxon>
        <taxon>Moorellaceae</taxon>
        <taxon>Moorella</taxon>
    </lineage>
</organism>
<name>ILVD_MOOTA</name>
<reference key="1">
    <citation type="journal article" date="2008" name="Environ. Microbiol.">
        <title>The complete genome sequence of Moorella thermoacetica (f. Clostridium thermoaceticum).</title>
        <authorList>
            <person name="Pierce E."/>
            <person name="Xie G."/>
            <person name="Barabote R.D."/>
            <person name="Saunders E."/>
            <person name="Han C.S."/>
            <person name="Detter J.C."/>
            <person name="Richardson P."/>
            <person name="Brettin T.S."/>
            <person name="Das A."/>
            <person name="Ljungdahl L.G."/>
            <person name="Ragsdale S.W."/>
        </authorList>
    </citation>
    <scope>NUCLEOTIDE SEQUENCE [LARGE SCALE GENOMIC DNA]</scope>
    <source>
        <strain>ATCC 39073 / JCM 9320</strain>
    </source>
</reference>
<sequence>MRSDAMKTGLARAPHRSLLKAMGLTETEIERPIIGVVNAHNELIPGHIHLNNLVEAVKAGVRLAGGTPLEFPTIGVCDGLAMNHVGMKYSLASRELIADMIEVMAMAHPFDALVFIPNCDKIVPGMLMAAARLNLPAIFISGGPMLAGRYQGRDVSLSTMFEAVGAVQAGKMTEQELAALEDCACPGCGSCAGMFTANTMNCMVEALGMGLPGNGTTPAVSGSRVRLAKEAGMQVMKLLQENIRPLDIMTATAFRNAVAVDMALGGSTNTCLHLPAIAHEAGVKLDLNTFNEINRRTPQICKLSPAGSQHIQDLDEAGGIPAVMNELYRHGLIDGSALTVTGRTVADNVSGRVVSRREVIRPVEDPYSREGGLAVLYGNLAPEGAVVKKGAVLPEMMRHEGPARVFNSEEEAFAAIMGKQIKPGDVVVIRYEGPRGGPGMQEMLSPTAALAGMGLDSSVALITDGRFSGASRGASIGHVSPEAAAGGLIALVEEGDIIAIDIEAGKLELKVPEEEIARRRQNWQAPPPKITGGYLGRYARMVTSGARGAVLE</sequence>
<evidence type="ECO:0000255" key="1">
    <source>
        <dbReference type="HAMAP-Rule" id="MF_00012"/>
    </source>
</evidence>
<protein>
    <recommendedName>
        <fullName evidence="1">Dihydroxy-acid dehydratase</fullName>
        <shortName evidence="1">DAD</shortName>
        <ecNumber evidence="1">4.2.1.9</ecNumber>
    </recommendedName>
</protein>
<dbReference type="EC" id="4.2.1.9" evidence="1"/>
<dbReference type="EMBL" id="CP000232">
    <property type="protein sequence ID" value="ABC20546.1"/>
    <property type="molecule type" value="Genomic_DNA"/>
</dbReference>
<dbReference type="RefSeq" id="YP_431089.1">
    <property type="nucleotide sequence ID" value="NC_007644.1"/>
</dbReference>
<dbReference type="SMR" id="Q2RG93"/>
<dbReference type="STRING" id="264732.Moth_2259"/>
<dbReference type="EnsemblBacteria" id="ABC20546">
    <property type="protein sequence ID" value="ABC20546"/>
    <property type="gene ID" value="Moth_2259"/>
</dbReference>
<dbReference type="KEGG" id="mta:Moth_2259"/>
<dbReference type="PATRIC" id="fig|264732.11.peg.2458"/>
<dbReference type="eggNOG" id="COG0129">
    <property type="taxonomic scope" value="Bacteria"/>
</dbReference>
<dbReference type="HOGENOM" id="CLU_014271_4_0_9"/>
<dbReference type="OrthoDB" id="9807077at2"/>
<dbReference type="UniPathway" id="UPA00047">
    <property type="reaction ID" value="UER00057"/>
</dbReference>
<dbReference type="UniPathway" id="UPA00049">
    <property type="reaction ID" value="UER00061"/>
</dbReference>
<dbReference type="GO" id="GO:0005829">
    <property type="term" value="C:cytosol"/>
    <property type="evidence" value="ECO:0007669"/>
    <property type="project" value="TreeGrafter"/>
</dbReference>
<dbReference type="GO" id="GO:0051537">
    <property type="term" value="F:2 iron, 2 sulfur cluster binding"/>
    <property type="evidence" value="ECO:0007669"/>
    <property type="project" value="UniProtKB-UniRule"/>
</dbReference>
<dbReference type="GO" id="GO:0004160">
    <property type="term" value="F:dihydroxy-acid dehydratase activity"/>
    <property type="evidence" value="ECO:0007669"/>
    <property type="project" value="UniProtKB-UniRule"/>
</dbReference>
<dbReference type="GO" id="GO:0000287">
    <property type="term" value="F:magnesium ion binding"/>
    <property type="evidence" value="ECO:0007669"/>
    <property type="project" value="UniProtKB-UniRule"/>
</dbReference>
<dbReference type="GO" id="GO:0009097">
    <property type="term" value="P:isoleucine biosynthetic process"/>
    <property type="evidence" value="ECO:0007669"/>
    <property type="project" value="UniProtKB-UniRule"/>
</dbReference>
<dbReference type="GO" id="GO:0009099">
    <property type="term" value="P:L-valine biosynthetic process"/>
    <property type="evidence" value="ECO:0007669"/>
    <property type="project" value="UniProtKB-UniRule"/>
</dbReference>
<dbReference type="FunFam" id="3.50.30.80:FF:000001">
    <property type="entry name" value="Dihydroxy-acid dehydratase"/>
    <property type="match status" value="1"/>
</dbReference>
<dbReference type="Gene3D" id="3.50.30.80">
    <property type="entry name" value="IlvD/EDD C-terminal domain-like"/>
    <property type="match status" value="1"/>
</dbReference>
<dbReference type="HAMAP" id="MF_00012">
    <property type="entry name" value="IlvD"/>
    <property type="match status" value="1"/>
</dbReference>
<dbReference type="InterPro" id="IPR042096">
    <property type="entry name" value="Dihydro-acid_dehy_C"/>
</dbReference>
<dbReference type="InterPro" id="IPR004404">
    <property type="entry name" value="DihydroxyA_deHydtase"/>
</dbReference>
<dbReference type="InterPro" id="IPR020558">
    <property type="entry name" value="DiOHA_6PGluconate_deHydtase_CS"/>
</dbReference>
<dbReference type="InterPro" id="IPR056740">
    <property type="entry name" value="ILV_EDD_C"/>
</dbReference>
<dbReference type="InterPro" id="IPR000581">
    <property type="entry name" value="ILV_EDD_N"/>
</dbReference>
<dbReference type="InterPro" id="IPR037237">
    <property type="entry name" value="IlvD/EDD_N"/>
</dbReference>
<dbReference type="NCBIfam" id="TIGR00110">
    <property type="entry name" value="ilvD"/>
    <property type="match status" value="1"/>
</dbReference>
<dbReference type="NCBIfam" id="NF002068">
    <property type="entry name" value="PRK00911.1"/>
    <property type="match status" value="1"/>
</dbReference>
<dbReference type="PANTHER" id="PTHR43661">
    <property type="entry name" value="D-XYLONATE DEHYDRATASE"/>
    <property type="match status" value="1"/>
</dbReference>
<dbReference type="PANTHER" id="PTHR43661:SF3">
    <property type="entry name" value="D-XYLONATE DEHYDRATASE YAGF-RELATED"/>
    <property type="match status" value="1"/>
</dbReference>
<dbReference type="Pfam" id="PF24877">
    <property type="entry name" value="ILV_EDD_C"/>
    <property type="match status" value="1"/>
</dbReference>
<dbReference type="Pfam" id="PF00920">
    <property type="entry name" value="ILVD_EDD_N"/>
    <property type="match status" value="1"/>
</dbReference>
<dbReference type="SUPFAM" id="SSF143975">
    <property type="entry name" value="IlvD/EDD N-terminal domain-like"/>
    <property type="match status" value="1"/>
</dbReference>
<dbReference type="SUPFAM" id="SSF52016">
    <property type="entry name" value="LeuD/IlvD-like"/>
    <property type="match status" value="1"/>
</dbReference>
<dbReference type="PROSITE" id="PS00886">
    <property type="entry name" value="ILVD_EDD_1"/>
    <property type="match status" value="1"/>
</dbReference>
<dbReference type="PROSITE" id="PS00887">
    <property type="entry name" value="ILVD_EDD_2"/>
    <property type="match status" value="1"/>
</dbReference>
<proteinExistence type="inferred from homology"/>
<comment type="function">
    <text evidence="1">Functions in the biosynthesis of branched-chain amino acids. Catalyzes the dehydration of (2R,3R)-2,3-dihydroxy-3-methylpentanoate (2,3-dihydroxy-3-methylvalerate) into 2-oxo-3-methylpentanoate (2-oxo-3-methylvalerate) and of (2R)-2,3-dihydroxy-3-methylbutanoate (2,3-dihydroxyisovalerate) into 2-oxo-3-methylbutanoate (2-oxoisovalerate), the penultimate precursor to L-isoleucine and L-valine, respectively.</text>
</comment>
<comment type="catalytic activity">
    <reaction evidence="1">
        <text>(2R)-2,3-dihydroxy-3-methylbutanoate = 3-methyl-2-oxobutanoate + H2O</text>
        <dbReference type="Rhea" id="RHEA:24809"/>
        <dbReference type="ChEBI" id="CHEBI:11851"/>
        <dbReference type="ChEBI" id="CHEBI:15377"/>
        <dbReference type="ChEBI" id="CHEBI:49072"/>
        <dbReference type="EC" id="4.2.1.9"/>
    </reaction>
    <physiologicalReaction direction="left-to-right" evidence="1">
        <dbReference type="Rhea" id="RHEA:24810"/>
    </physiologicalReaction>
</comment>
<comment type="catalytic activity">
    <reaction evidence="1">
        <text>(2R,3R)-2,3-dihydroxy-3-methylpentanoate = (S)-3-methyl-2-oxopentanoate + H2O</text>
        <dbReference type="Rhea" id="RHEA:27694"/>
        <dbReference type="ChEBI" id="CHEBI:15377"/>
        <dbReference type="ChEBI" id="CHEBI:35146"/>
        <dbReference type="ChEBI" id="CHEBI:49258"/>
        <dbReference type="EC" id="4.2.1.9"/>
    </reaction>
    <physiologicalReaction direction="left-to-right" evidence="1">
        <dbReference type="Rhea" id="RHEA:27695"/>
    </physiologicalReaction>
</comment>
<comment type="cofactor">
    <cofactor evidence="1">
        <name>[2Fe-2S] cluster</name>
        <dbReference type="ChEBI" id="CHEBI:190135"/>
    </cofactor>
    <text evidence="1">Binds 1 [2Fe-2S] cluster per subunit. This cluster acts as a Lewis acid cofactor.</text>
</comment>
<comment type="cofactor">
    <cofactor evidence="1">
        <name>Mg(2+)</name>
        <dbReference type="ChEBI" id="CHEBI:18420"/>
    </cofactor>
</comment>
<comment type="pathway">
    <text evidence="1">Amino-acid biosynthesis; L-isoleucine biosynthesis; L-isoleucine from 2-oxobutanoate: step 3/4.</text>
</comment>
<comment type="pathway">
    <text evidence="1">Amino-acid biosynthesis; L-valine biosynthesis; L-valine from pyruvate: step 3/4.</text>
</comment>
<comment type="subunit">
    <text evidence="1">Homodimer.</text>
</comment>
<comment type="similarity">
    <text evidence="1">Belongs to the IlvD/Edd family.</text>
</comment>
<accession>Q2RG93</accession>